<sequence length="405" mass="43859">MNRTKTVNWKRNLFITWIGCFFVGSSFSLVMPFLPLYIQGLGVSGGNVELYSGLAFSLPALASGLVAPIWGRLADEHGRKVMMVRASIVMTLTMGGIAFAPNVWWLLGLRLLMGFFSGYIPNSTAMIASQAPKDKSGYALGTLATAMVSGTLIGPSLGGLLAEWFGMANVFLIVGALLALATLLTIFFVHENFEPIAKGEMLSSKEIINKVSNKQILFGLLVTTFIIQITSQSIEPFVTLYIKTLTTSTNNLMFISGLIVSAVGLSAMLSSSFLGRLGDKYGSHRLILIGLVFTFIIYLPMAFVQSPLQLGILRFLLGFGTGALTPSVNSLLSKITPKEGVSRIFAYAQMCSNLGMVTGPLVGSAIAGYISYRAAIVGTSLFVIVNIIWSFINFRKYLRKRSIME</sequence>
<comment type="function">
    <text evidence="1">Efflux pump for various substrates.</text>
</comment>
<comment type="subcellular location">
    <subcellularLocation>
        <location evidence="3">Cell membrane</location>
        <topology evidence="3">Multi-pass membrane protein</topology>
    </subcellularLocation>
</comment>
<comment type="similarity">
    <text evidence="3">Belongs to the major facilitator superfamily. TCR/Tet family.</text>
</comment>
<protein>
    <recommendedName>
        <fullName>Multi-drug resistance efflux pump PmrA homolog</fullName>
    </recommendedName>
</protein>
<keyword id="KW-1003">Cell membrane</keyword>
<keyword id="KW-0472">Membrane</keyword>
<keyword id="KW-1185">Reference proteome</keyword>
<keyword id="KW-0812">Transmembrane</keyword>
<keyword id="KW-1133">Transmembrane helix</keyword>
<keyword id="KW-0813">Transport</keyword>
<proteinExistence type="inferred from homology"/>
<feature type="chain" id="PRO_0000173375" description="Multi-drug resistance efflux pump PmrA homolog">
    <location>
        <begin position="1"/>
        <end position="405"/>
    </location>
</feature>
<feature type="transmembrane region" description="Helical" evidence="2">
    <location>
        <begin position="13"/>
        <end position="33"/>
    </location>
</feature>
<feature type="transmembrane region" description="Helical" evidence="2">
    <location>
        <begin position="50"/>
        <end position="70"/>
    </location>
</feature>
<feature type="transmembrane region" description="Helical" evidence="2">
    <location>
        <begin position="88"/>
        <end position="108"/>
    </location>
</feature>
<feature type="transmembrane region" description="Helical" evidence="2">
    <location>
        <begin position="111"/>
        <end position="131"/>
    </location>
</feature>
<feature type="transmembrane region" description="Helical" evidence="2">
    <location>
        <begin position="147"/>
        <end position="167"/>
    </location>
</feature>
<feature type="transmembrane region" description="Helical" evidence="2">
    <location>
        <begin position="170"/>
        <end position="190"/>
    </location>
</feature>
<feature type="transmembrane region" description="Helical" evidence="2">
    <location>
        <begin position="216"/>
        <end position="236"/>
    </location>
</feature>
<feature type="transmembrane region" description="Helical" evidence="2">
    <location>
        <begin position="254"/>
        <end position="274"/>
    </location>
</feature>
<feature type="transmembrane region" description="Helical" evidence="2">
    <location>
        <begin position="286"/>
        <end position="306"/>
    </location>
</feature>
<feature type="transmembrane region" description="Helical" evidence="2">
    <location>
        <begin position="308"/>
        <end position="328"/>
    </location>
</feature>
<feature type="transmembrane region" description="Helical" evidence="2">
    <location>
        <begin position="350"/>
        <end position="370"/>
    </location>
</feature>
<feature type="transmembrane region" description="Helical" evidence="2">
    <location>
        <begin position="374"/>
        <end position="394"/>
    </location>
</feature>
<organism>
    <name type="scientific">Lactococcus lactis subsp. lactis (strain IL1403)</name>
    <name type="common">Streptococcus lactis</name>
    <dbReference type="NCBI Taxonomy" id="272623"/>
    <lineage>
        <taxon>Bacteria</taxon>
        <taxon>Bacillati</taxon>
        <taxon>Bacillota</taxon>
        <taxon>Bacilli</taxon>
        <taxon>Lactobacillales</taxon>
        <taxon>Streptococcaceae</taxon>
        <taxon>Lactococcus</taxon>
    </lineage>
</organism>
<evidence type="ECO:0000250" key="1"/>
<evidence type="ECO:0000255" key="2"/>
<evidence type="ECO:0000305" key="3"/>
<reference key="1">
    <citation type="journal article" date="2001" name="Genome Res.">
        <title>The complete genome sequence of the lactic acid bacterium Lactococcus lactis ssp. lactis IL1403.</title>
        <authorList>
            <person name="Bolotin A."/>
            <person name="Wincker P."/>
            <person name="Mauger S."/>
            <person name="Jaillon O."/>
            <person name="Malarme K."/>
            <person name="Weissenbach J."/>
            <person name="Ehrlich S.D."/>
            <person name="Sorokin A."/>
        </authorList>
    </citation>
    <scope>NUCLEOTIDE SEQUENCE [LARGE SCALE GENOMIC DNA]</scope>
    <source>
        <strain>IL1403</strain>
    </source>
</reference>
<dbReference type="EMBL" id="AE005176">
    <property type="protein sequence ID" value="AAK04764.1"/>
    <property type="molecule type" value="Genomic_DNA"/>
</dbReference>
<dbReference type="PIR" id="B86708">
    <property type="entry name" value="B86708"/>
</dbReference>
<dbReference type="RefSeq" id="NP_266822.1">
    <property type="nucleotide sequence ID" value="NC_002662.1"/>
</dbReference>
<dbReference type="RefSeq" id="WP_010905496.1">
    <property type="nucleotide sequence ID" value="NC_002662.1"/>
</dbReference>
<dbReference type="SMR" id="P58120"/>
<dbReference type="PaxDb" id="272623-L60571"/>
<dbReference type="EnsemblBacteria" id="AAK04764">
    <property type="protein sequence ID" value="AAK04764"/>
    <property type="gene ID" value="L60571"/>
</dbReference>
<dbReference type="KEGG" id="lla:L60571"/>
<dbReference type="PATRIC" id="fig|272623.7.peg.713"/>
<dbReference type="eggNOG" id="COG2814">
    <property type="taxonomic scope" value="Bacteria"/>
</dbReference>
<dbReference type="HOGENOM" id="CLU_001265_57_3_9"/>
<dbReference type="OrthoDB" id="65739at2"/>
<dbReference type="Proteomes" id="UP000002196">
    <property type="component" value="Chromosome"/>
</dbReference>
<dbReference type="GO" id="GO:0005886">
    <property type="term" value="C:plasma membrane"/>
    <property type="evidence" value="ECO:0007669"/>
    <property type="project" value="UniProtKB-SubCell"/>
</dbReference>
<dbReference type="GO" id="GO:0022857">
    <property type="term" value="F:transmembrane transporter activity"/>
    <property type="evidence" value="ECO:0007669"/>
    <property type="project" value="InterPro"/>
</dbReference>
<dbReference type="CDD" id="cd17391">
    <property type="entry name" value="MFS_MdtG_MDR_like"/>
    <property type="match status" value="1"/>
</dbReference>
<dbReference type="Gene3D" id="1.20.1250.20">
    <property type="entry name" value="MFS general substrate transporter like domains"/>
    <property type="match status" value="2"/>
</dbReference>
<dbReference type="InterPro" id="IPR011701">
    <property type="entry name" value="MFS"/>
</dbReference>
<dbReference type="InterPro" id="IPR020846">
    <property type="entry name" value="MFS_dom"/>
</dbReference>
<dbReference type="InterPro" id="IPR050497">
    <property type="entry name" value="MFS_MdtG_subfamily"/>
</dbReference>
<dbReference type="InterPro" id="IPR036259">
    <property type="entry name" value="MFS_trans_sf"/>
</dbReference>
<dbReference type="InterPro" id="IPR001958">
    <property type="entry name" value="Tet-R_TetA/multi-R_MdtG-like"/>
</dbReference>
<dbReference type="PANTHER" id="PTHR43414">
    <property type="entry name" value="MULTIDRUG RESISTANCE PROTEIN MDTG"/>
    <property type="match status" value="1"/>
</dbReference>
<dbReference type="PANTHER" id="PTHR43414:SF6">
    <property type="entry name" value="MULTIDRUG RESISTANCE PROTEIN MDTG"/>
    <property type="match status" value="1"/>
</dbReference>
<dbReference type="Pfam" id="PF07690">
    <property type="entry name" value="MFS_1"/>
    <property type="match status" value="1"/>
</dbReference>
<dbReference type="PRINTS" id="PR01035">
    <property type="entry name" value="TCRTETA"/>
</dbReference>
<dbReference type="SUPFAM" id="SSF103473">
    <property type="entry name" value="MFS general substrate transporter"/>
    <property type="match status" value="1"/>
</dbReference>
<dbReference type="PROSITE" id="PS50850">
    <property type="entry name" value="MFS"/>
    <property type="match status" value="1"/>
</dbReference>
<gene>
    <name type="primary">pmrA</name>
    <name type="ordered locus">LL0666</name>
    <name type="ORF">L60571</name>
</gene>
<name>PMRA_LACLA</name>
<accession>P58120</accession>